<accession>D4B4Q2</accession>
<organism>
    <name type="scientific">Arthroderma benhamiae (strain ATCC MYA-4681 / CBS 112371)</name>
    <name type="common">Trichophyton mentagrophytes</name>
    <dbReference type="NCBI Taxonomy" id="663331"/>
    <lineage>
        <taxon>Eukaryota</taxon>
        <taxon>Fungi</taxon>
        <taxon>Dikarya</taxon>
        <taxon>Ascomycota</taxon>
        <taxon>Pezizomycotina</taxon>
        <taxon>Eurotiomycetes</taxon>
        <taxon>Eurotiomycetidae</taxon>
        <taxon>Onygenales</taxon>
        <taxon>Arthrodermataceae</taxon>
        <taxon>Trichophyton</taxon>
    </lineage>
</organism>
<protein>
    <recommendedName>
        <fullName evidence="6">LysM domain-containing protein ARB_03442</fullName>
    </recommendedName>
</protein>
<gene>
    <name type="ORF">ARB_03442</name>
</gene>
<proteinExistence type="inferred from homology"/>
<sequence length="519" mass="55652">MGQLKQLAGILALASPAIAAFSVYALHDPDALKASLGVTSECLSALNYTVECDGPSAVRATKNSDNDPWSMDDLTTLCTDGCSKSLSTWFDAVEQKCEGEEVTINGLVVDPKAFPMKYISGYDLACLRDSNDNWCFYEAQDWDSGVFTSWDKKQPDACSGENPPADCDKKGSEEDVDTLYVTNSYDKELYCSECFMLLWRQRIESPVFPQGNLLDHFTKQFSKLEAACSTKLPLTTPAPTVVLGAKDTLPPATGYHTDGSTVFRYSSPPAPTITTEEPIAKRTAAPRAMKTFYTPATPDRTPQLGAMAPCGKYYNVVAGDTCASISSEFEVTMDELLTYNPELHPNCENLWANFAICVAPVSPNPMTVDGSCGENNAGATCDGSPFGSCCNNEGRCVPCGPEATAAPDAPDAQGQTVHDDEPPEEPHIEEPPKDIPAGDDDDRKKAKLPLPSGKYPLPSNSTMISKDGSCNEYISCVGSPFGVCCSTSGWCGYGKPWCGVGNCVSGYCDTEDKASGKPQ</sequence>
<feature type="signal peptide" evidence="1">
    <location>
        <begin position="1"/>
        <end position="19"/>
    </location>
</feature>
<feature type="chain" id="PRO_5003053765" description="LysM domain-containing protein ARB_03442">
    <location>
        <begin position="20"/>
        <end position="519"/>
    </location>
</feature>
<feature type="domain" description="LysM" evidence="4">
    <location>
        <begin position="312"/>
        <end position="358"/>
    </location>
</feature>
<feature type="domain" description="Chitin-binding type-1" evidence="2">
    <location>
        <begin position="467"/>
        <end position="510"/>
    </location>
</feature>
<feature type="region of interest" description="LysM domain" evidence="6">
    <location>
        <begin position="314"/>
        <end position="358"/>
    </location>
</feature>
<feature type="region of interest" description="Disordered" evidence="5">
    <location>
        <begin position="407"/>
        <end position="458"/>
    </location>
</feature>
<feature type="compositionally biased region" description="Low complexity" evidence="5">
    <location>
        <begin position="407"/>
        <end position="416"/>
    </location>
</feature>
<feature type="compositionally biased region" description="Basic and acidic residues" evidence="5">
    <location>
        <begin position="417"/>
        <end position="433"/>
    </location>
</feature>
<feature type="glycosylation site" description="N-linked (GlcNAc...) asparagine" evidence="3">
    <location>
        <position position="47"/>
    </location>
</feature>
<feature type="glycosylation site" description="N-linked (GlcNAc...) asparagine" evidence="3">
    <location>
        <position position="460"/>
    </location>
</feature>
<feature type="disulfide bond" evidence="2">
    <location>
        <begin position="470"/>
        <end position="485"/>
    </location>
</feature>
<feature type="disulfide bond" evidence="2">
    <location>
        <begin position="476"/>
        <end position="491"/>
    </location>
</feature>
<feature type="disulfide bond" evidence="2">
    <location>
        <begin position="484"/>
        <end position="498"/>
    </location>
</feature>
<feature type="disulfide bond" evidence="2">
    <location>
        <begin position="503"/>
        <end position="508"/>
    </location>
</feature>
<comment type="function">
    <text evidence="7">Might have a role in sequestration of chitin oligosaccharides (breakdown products of fungal cell walls that are released during invasion and act as triggers of host immunity) to dampen host defense.</text>
</comment>
<comment type="subcellular location">
    <subcellularLocation>
        <location evidence="6">Secreted</location>
    </subcellularLocation>
</comment>
<comment type="domain">
    <text evidence="7">The LysM domain binds chitin and potentially related carbohydrates, and might be involved in damping host defense.</text>
</comment>
<comment type="sequence caution" evidence="6">
    <conflict type="erroneous gene model prediction">
        <sequence resource="EMBL-CDS" id="EFE30100"/>
    </conflict>
</comment>
<reference key="1">
    <citation type="journal article" date="2011" name="Genome Biol.">
        <title>Comparative and functional genomics provide insights into the pathogenicity of dermatophytic fungi.</title>
        <authorList>
            <person name="Burmester A."/>
            <person name="Shelest E."/>
            <person name="Gloeckner G."/>
            <person name="Heddergott C."/>
            <person name="Schindler S."/>
            <person name="Staib P."/>
            <person name="Heidel A."/>
            <person name="Felder M."/>
            <person name="Petzold A."/>
            <person name="Szafranski K."/>
            <person name="Feuermann M."/>
            <person name="Pedruzzi I."/>
            <person name="Priebe S."/>
            <person name="Groth M."/>
            <person name="Winkler R."/>
            <person name="Li W."/>
            <person name="Kniemeyer O."/>
            <person name="Schroeckh V."/>
            <person name="Hertweck C."/>
            <person name="Hube B."/>
            <person name="White T.C."/>
            <person name="Platzer M."/>
            <person name="Guthke R."/>
            <person name="Heitman J."/>
            <person name="Woestemeyer J."/>
            <person name="Zipfel P.F."/>
            <person name="Monod M."/>
            <person name="Brakhage A.A."/>
        </authorList>
    </citation>
    <scope>NUCLEOTIDE SEQUENCE [LARGE SCALE GENOMIC DNA]</scope>
    <source>
        <strain>ATCC MYA-4681 / CBS 112371</strain>
    </source>
</reference>
<reference key="2">
    <citation type="journal article" date="2009" name="Trends Microbiol.">
        <title>Fungal LysM effectors: extinguishers of host immunity?</title>
        <authorList>
            <person name="de Jonge R."/>
            <person name="Thomma B.P."/>
        </authorList>
    </citation>
    <scope>DOMAIN</scope>
    <scope>FUNCTION PREDICTION</scope>
</reference>
<keyword id="KW-0147">Chitin-binding</keyword>
<keyword id="KW-1015">Disulfide bond</keyword>
<keyword id="KW-0325">Glycoprotein</keyword>
<keyword id="KW-1185">Reference proteome</keyword>
<keyword id="KW-0964">Secreted</keyword>
<keyword id="KW-0732">Signal</keyword>
<keyword id="KW-0843">Virulence</keyword>
<name>LYSM4_ARTBC</name>
<dbReference type="EMBL" id="ABSU01000034">
    <property type="protein sequence ID" value="EFE30100.1"/>
    <property type="status" value="ALT_SEQ"/>
    <property type="molecule type" value="Genomic_DNA"/>
</dbReference>
<dbReference type="RefSeq" id="XP_003010740.1">
    <property type="nucleotide sequence ID" value="XM_003010694.1"/>
</dbReference>
<dbReference type="SMR" id="D4B4Q2"/>
<dbReference type="STRING" id="663331.D4B4Q2"/>
<dbReference type="GeneID" id="9524853"/>
<dbReference type="KEGG" id="abe:ARB_03442"/>
<dbReference type="HOGENOM" id="CLU_973832_0_0_1"/>
<dbReference type="OrthoDB" id="5985073at2759"/>
<dbReference type="Proteomes" id="UP000008866">
    <property type="component" value="Unassembled WGS sequence"/>
</dbReference>
<dbReference type="GO" id="GO:0005576">
    <property type="term" value="C:extracellular region"/>
    <property type="evidence" value="ECO:0007669"/>
    <property type="project" value="UniProtKB-SubCell"/>
</dbReference>
<dbReference type="GO" id="GO:0008061">
    <property type="term" value="F:chitin binding"/>
    <property type="evidence" value="ECO:0007669"/>
    <property type="project" value="UniProtKB-KW"/>
</dbReference>
<dbReference type="CDD" id="cd00118">
    <property type="entry name" value="LysM"/>
    <property type="match status" value="1"/>
</dbReference>
<dbReference type="Gene3D" id="3.10.350.10">
    <property type="entry name" value="LysM domain"/>
    <property type="match status" value="1"/>
</dbReference>
<dbReference type="InterPro" id="IPR036861">
    <property type="entry name" value="Endochitinase-like_sf"/>
</dbReference>
<dbReference type="InterPro" id="IPR018392">
    <property type="entry name" value="LysM_dom"/>
</dbReference>
<dbReference type="InterPro" id="IPR036779">
    <property type="entry name" value="LysM_dom_sf"/>
</dbReference>
<dbReference type="Pfam" id="PF01476">
    <property type="entry name" value="LysM"/>
    <property type="match status" value="1"/>
</dbReference>
<dbReference type="SMART" id="SM00257">
    <property type="entry name" value="LysM"/>
    <property type="match status" value="1"/>
</dbReference>
<dbReference type="SUPFAM" id="SSF54106">
    <property type="entry name" value="LysM domain"/>
    <property type="match status" value="1"/>
</dbReference>
<dbReference type="SUPFAM" id="SSF57016">
    <property type="entry name" value="Plant lectins/antimicrobial peptides"/>
    <property type="match status" value="1"/>
</dbReference>
<dbReference type="PROSITE" id="PS00026">
    <property type="entry name" value="CHIT_BIND_I_1"/>
    <property type="match status" value="1"/>
</dbReference>
<dbReference type="PROSITE" id="PS50941">
    <property type="entry name" value="CHIT_BIND_I_2"/>
    <property type="match status" value="1"/>
</dbReference>
<dbReference type="PROSITE" id="PS51782">
    <property type="entry name" value="LYSM"/>
    <property type="match status" value="1"/>
</dbReference>
<evidence type="ECO:0000255" key="1"/>
<evidence type="ECO:0000255" key="2">
    <source>
        <dbReference type="PROSITE-ProRule" id="PRU00261"/>
    </source>
</evidence>
<evidence type="ECO:0000255" key="3">
    <source>
        <dbReference type="PROSITE-ProRule" id="PRU00498"/>
    </source>
</evidence>
<evidence type="ECO:0000255" key="4">
    <source>
        <dbReference type="PROSITE-ProRule" id="PRU01118"/>
    </source>
</evidence>
<evidence type="ECO:0000256" key="5">
    <source>
        <dbReference type="SAM" id="MobiDB-lite"/>
    </source>
</evidence>
<evidence type="ECO:0000305" key="6"/>
<evidence type="ECO:0000305" key="7">
    <source>
    </source>
</evidence>